<keyword id="KW-0963">Cytoplasm</keyword>
<keyword id="KW-0479">Metal-binding</keyword>
<keyword id="KW-0539">Nucleus</keyword>
<keyword id="KW-0597">Phosphoprotein</keyword>
<keyword id="KW-1185">Reference proteome</keyword>
<keyword id="KW-0677">Repeat</keyword>
<keyword id="KW-0808">Transferase</keyword>
<keyword id="KW-0832">Ubl conjugation</keyword>
<keyword id="KW-0833">Ubl conjugation pathway</keyword>
<keyword id="KW-0862">Zinc</keyword>
<keyword id="KW-0863">Zinc-finger</keyword>
<dbReference type="EC" id="2.3.2.31" evidence="1"/>
<dbReference type="EMBL" id="AF124664">
    <property type="protein sequence ID" value="AAD24573.1"/>
    <property type="molecule type" value="mRNA"/>
</dbReference>
<dbReference type="EMBL" id="AJ130975">
    <property type="protein sequence ID" value="CAA10273.1"/>
    <property type="molecule type" value="mRNA"/>
</dbReference>
<dbReference type="EMBL" id="BC051998">
    <property type="protein sequence ID" value="AAH51998.1"/>
    <property type="molecule type" value="mRNA"/>
</dbReference>
<dbReference type="EMBL" id="BC052422">
    <property type="protein sequence ID" value="AAH52422.1"/>
    <property type="molecule type" value="mRNA"/>
</dbReference>
<dbReference type="CCDS" id="CCDS23534.1"/>
<dbReference type="RefSeq" id="NP_001344212.1">
    <property type="nucleotide sequence ID" value="NM_001357283.2"/>
</dbReference>
<dbReference type="RefSeq" id="NP_001344214.1">
    <property type="nucleotide sequence ID" value="NM_001357285.1"/>
</dbReference>
<dbReference type="RefSeq" id="NP_035920.1">
    <property type="nucleotide sequence ID" value="NM_011790.6"/>
</dbReference>
<dbReference type="RefSeq" id="XP_006511788.1">
    <property type="nucleotide sequence ID" value="XM_006511725.2"/>
</dbReference>
<dbReference type="RefSeq" id="XP_030100211.1">
    <property type="nucleotide sequence ID" value="XM_030244351.2"/>
</dbReference>
<dbReference type="RefSeq" id="XP_030100212.1">
    <property type="nucleotide sequence ID" value="XM_030244352.1"/>
</dbReference>
<dbReference type="SMR" id="Q9Z1K6"/>
<dbReference type="BioGRID" id="204727">
    <property type="interactions" value="5"/>
</dbReference>
<dbReference type="FunCoup" id="Q9Z1K6">
    <property type="interactions" value="4099"/>
</dbReference>
<dbReference type="IntAct" id="Q9Z1K6">
    <property type="interactions" value="1"/>
</dbReference>
<dbReference type="STRING" id="10090.ENSMUSP00000013338"/>
<dbReference type="iPTMnet" id="Q9Z1K6"/>
<dbReference type="PhosphoSitePlus" id="Q9Z1K6"/>
<dbReference type="jPOST" id="Q9Z1K6"/>
<dbReference type="PaxDb" id="10090-ENSMUSP00000013338"/>
<dbReference type="ProteomicsDB" id="265093"/>
<dbReference type="Pumba" id="Q9Z1K6"/>
<dbReference type="Antibodypedia" id="13411">
    <property type="antibodies" value="356 antibodies from 35 providers"/>
</dbReference>
<dbReference type="DNASU" id="23807"/>
<dbReference type="Ensembl" id="ENSMUST00000013338.14">
    <property type="protein sequence ID" value="ENSMUSP00000013338.9"/>
    <property type="gene ID" value="ENSMUSG00000064145.13"/>
</dbReference>
<dbReference type="GeneID" id="23807"/>
<dbReference type="KEGG" id="mmu:23807"/>
<dbReference type="UCSC" id="uc009rqo.1">
    <property type="organism name" value="mouse"/>
</dbReference>
<dbReference type="AGR" id="MGI:1344361"/>
<dbReference type="CTD" id="10425"/>
<dbReference type="MGI" id="MGI:1344361">
    <property type="gene designation" value="Arih2"/>
</dbReference>
<dbReference type="VEuPathDB" id="HostDB:ENSMUSG00000064145"/>
<dbReference type="eggNOG" id="KOG1812">
    <property type="taxonomic scope" value="Eukaryota"/>
</dbReference>
<dbReference type="GeneTree" id="ENSGT00940000154875"/>
<dbReference type="HOGENOM" id="CLU_009823_0_1_1"/>
<dbReference type="InParanoid" id="Q9Z1K6"/>
<dbReference type="OMA" id="PYAYYMD"/>
<dbReference type="OrthoDB" id="10009520at2759"/>
<dbReference type="PhylomeDB" id="Q9Z1K6"/>
<dbReference type="TreeFam" id="TF300805"/>
<dbReference type="Reactome" id="R-MMU-983168">
    <property type="pathway name" value="Antigen processing: Ubiquitination &amp; Proteasome degradation"/>
</dbReference>
<dbReference type="UniPathway" id="UPA00143"/>
<dbReference type="BioGRID-ORCS" id="23807">
    <property type="hits" value="11 hits in 76 CRISPR screens"/>
</dbReference>
<dbReference type="ChiTaRS" id="Arih2">
    <property type="organism name" value="mouse"/>
</dbReference>
<dbReference type="PRO" id="PR:Q9Z1K6"/>
<dbReference type="Proteomes" id="UP000000589">
    <property type="component" value="Chromosome 9"/>
</dbReference>
<dbReference type="RNAct" id="Q9Z1K6">
    <property type="molecule type" value="protein"/>
</dbReference>
<dbReference type="Bgee" id="ENSMUSG00000064145">
    <property type="expression patterns" value="Expressed in paneth cell and 257 other cell types or tissues"/>
</dbReference>
<dbReference type="ExpressionAtlas" id="Q9Z1K6">
    <property type="expression patterns" value="baseline and differential"/>
</dbReference>
<dbReference type="GO" id="GO:0031466">
    <property type="term" value="C:Cul5-RING ubiquitin ligase complex"/>
    <property type="evidence" value="ECO:0007669"/>
    <property type="project" value="Ensembl"/>
</dbReference>
<dbReference type="GO" id="GO:0005737">
    <property type="term" value="C:cytoplasm"/>
    <property type="evidence" value="ECO:0000250"/>
    <property type="project" value="UniProtKB"/>
</dbReference>
<dbReference type="GO" id="GO:0005654">
    <property type="term" value="C:nucleoplasm"/>
    <property type="evidence" value="ECO:0007669"/>
    <property type="project" value="Ensembl"/>
</dbReference>
<dbReference type="GO" id="GO:0005634">
    <property type="term" value="C:nucleus"/>
    <property type="evidence" value="ECO:0000250"/>
    <property type="project" value="UniProtKB"/>
</dbReference>
<dbReference type="GO" id="GO:0031624">
    <property type="term" value="F:ubiquitin conjugating enzyme binding"/>
    <property type="evidence" value="ECO:0007669"/>
    <property type="project" value="Ensembl"/>
</dbReference>
<dbReference type="GO" id="GO:0061630">
    <property type="term" value="F:ubiquitin protein ligase activity"/>
    <property type="evidence" value="ECO:0007669"/>
    <property type="project" value="Ensembl"/>
</dbReference>
<dbReference type="GO" id="GO:0004842">
    <property type="term" value="F:ubiquitin-protein transferase activity"/>
    <property type="evidence" value="ECO:0000250"/>
    <property type="project" value="UniProtKB"/>
</dbReference>
<dbReference type="GO" id="GO:0008270">
    <property type="term" value="F:zinc ion binding"/>
    <property type="evidence" value="ECO:0007669"/>
    <property type="project" value="UniProtKB-KW"/>
</dbReference>
<dbReference type="GO" id="GO:0048588">
    <property type="term" value="P:developmental cell growth"/>
    <property type="evidence" value="ECO:0000250"/>
    <property type="project" value="UniProtKB"/>
</dbReference>
<dbReference type="GO" id="GO:0071425">
    <property type="term" value="P:hematopoietic stem cell proliferation"/>
    <property type="evidence" value="ECO:0000250"/>
    <property type="project" value="UniProtKB"/>
</dbReference>
<dbReference type="GO" id="GO:0043161">
    <property type="term" value="P:proteasome-mediated ubiquitin-dependent protein catabolic process"/>
    <property type="evidence" value="ECO:0007669"/>
    <property type="project" value="Ensembl"/>
</dbReference>
<dbReference type="GO" id="GO:0070936">
    <property type="term" value="P:protein K48-linked ubiquitination"/>
    <property type="evidence" value="ECO:0000250"/>
    <property type="project" value="UniProtKB"/>
</dbReference>
<dbReference type="GO" id="GO:0070534">
    <property type="term" value="P:protein K63-linked ubiquitination"/>
    <property type="evidence" value="ECO:0000250"/>
    <property type="project" value="UniProtKB"/>
</dbReference>
<dbReference type="GO" id="GO:0000209">
    <property type="term" value="P:protein polyubiquitination"/>
    <property type="evidence" value="ECO:0000250"/>
    <property type="project" value="UniProtKB"/>
</dbReference>
<dbReference type="GO" id="GO:0016567">
    <property type="term" value="P:protein ubiquitination"/>
    <property type="evidence" value="ECO:0000250"/>
    <property type="project" value="UniProtKB"/>
</dbReference>
<dbReference type="GO" id="GO:0006511">
    <property type="term" value="P:ubiquitin-dependent protein catabolic process"/>
    <property type="evidence" value="ECO:0000353"/>
    <property type="project" value="MGI"/>
</dbReference>
<dbReference type="CDD" id="cd20344">
    <property type="entry name" value="BRcat_RBR_TRIAD1"/>
    <property type="match status" value="1"/>
</dbReference>
<dbReference type="CDD" id="cd20360">
    <property type="entry name" value="Rcat_RBR_TRIAD1"/>
    <property type="match status" value="1"/>
</dbReference>
<dbReference type="CDD" id="cd16773">
    <property type="entry name" value="RING-HC_RBR_TRIAD1"/>
    <property type="match status" value="1"/>
</dbReference>
<dbReference type="FunFam" id="1.20.120.1750:FF:000004">
    <property type="entry name" value="RBR-type E3 ubiquitin transferase"/>
    <property type="match status" value="1"/>
</dbReference>
<dbReference type="FunFam" id="2.20.25.20:FF:000005">
    <property type="entry name" value="RBR-type E3 ubiquitin transferase"/>
    <property type="match status" value="1"/>
</dbReference>
<dbReference type="FunFam" id="3.30.40.10:FF:000098">
    <property type="entry name" value="RBR-type E3 ubiquitin transferase"/>
    <property type="match status" value="1"/>
</dbReference>
<dbReference type="Gene3D" id="1.20.120.1750">
    <property type="match status" value="1"/>
</dbReference>
<dbReference type="Gene3D" id="2.20.25.20">
    <property type="match status" value="1"/>
</dbReference>
<dbReference type="Gene3D" id="3.30.40.10">
    <property type="entry name" value="Zinc/RING finger domain, C3HC4 (zinc finger)"/>
    <property type="match status" value="1"/>
</dbReference>
<dbReference type="InterPro" id="IPR045840">
    <property type="entry name" value="Ariadne"/>
</dbReference>
<dbReference type="InterPro" id="IPR047555">
    <property type="entry name" value="BRcat_RBR_TRIAD1"/>
</dbReference>
<dbReference type="InterPro" id="IPR031127">
    <property type="entry name" value="E3_UB_ligase_RBR"/>
</dbReference>
<dbReference type="InterPro" id="IPR002867">
    <property type="entry name" value="IBR_dom"/>
</dbReference>
<dbReference type="InterPro" id="IPR047556">
    <property type="entry name" value="Rcat_RBR_TRIAD1"/>
</dbReference>
<dbReference type="InterPro" id="IPR044066">
    <property type="entry name" value="TRIAD_supradom"/>
</dbReference>
<dbReference type="InterPro" id="IPR001841">
    <property type="entry name" value="Znf_RING"/>
</dbReference>
<dbReference type="InterPro" id="IPR013083">
    <property type="entry name" value="Znf_RING/FYVE/PHD"/>
</dbReference>
<dbReference type="InterPro" id="IPR017907">
    <property type="entry name" value="Znf_RING_CS"/>
</dbReference>
<dbReference type="PANTHER" id="PTHR11685">
    <property type="entry name" value="RBR FAMILY RING FINGER AND IBR DOMAIN-CONTAINING"/>
    <property type="match status" value="1"/>
</dbReference>
<dbReference type="Pfam" id="PF19422">
    <property type="entry name" value="Ariadne"/>
    <property type="match status" value="1"/>
</dbReference>
<dbReference type="Pfam" id="PF01485">
    <property type="entry name" value="IBR"/>
    <property type="match status" value="1"/>
</dbReference>
<dbReference type="Pfam" id="PF22191">
    <property type="entry name" value="IBR_1"/>
    <property type="match status" value="1"/>
</dbReference>
<dbReference type="SMART" id="SM00647">
    <property type="entry name" value="IBR"/>
    <property type="match status" value="2"/>
</dbReference>
<dbReference type="SMART" id="SM00184">
    <property type="entry name" value="RING"/>
    <property type="match status" value="2"/>
</dbReference>
<dbReference type="SUPFAM" id="SSF57850">
    <property type="entry name" value="RING/U-box"/>
    <property type="match status" value="3"/>
</dbReference>
<dbReference type="PROSITE" id="PS51873">
    <property type="entry name" value="TRIAD"/>
    <property type="match status" value="1"/>
</dbReference>
<dbReference type="PROSITE" id="PS00518">
    <property type="entry name" value="ZF_RING_1"/>
    <property type="match status" value="1"/>
</dbReference>
<dbReference type="PROSITE" id="PS50089">
    <property type="entry name" value="ZF_RING_2"/>
    <property type="match status" value="2"/>
</dbReference>
<evidence type="ECO:0000250" key="1">
    <source>
        <dbReference type="UniProtKB" id="O95376"/>
    </source>
</evidence>
<evidence type="ECO:0000250" key="2">
    <source>
        <dbReference type="UniProtKB" id="Q9Y4X5"/>
    </source>
</evidence>
<evidence type="ECO:0000255" key="3">
    <source>
        <dbReference type="PROSITE-ProRule" id="PRU01221"/>
    </source>
</evidence>
<evidence type="ECO:0000256" key="4">
    <source>
        <dbReference type="SAM" id="MobiDB-lite"/>
    </source>
</evidence>
<evidence type="ECO:0000305" key="5"/>
<evidence type="ECO:0007744" key="6">
    <source>
    </source>
</evidence>
<comment type="function">
    <text evidence="1 2">E3 ubiquitin-protein ligase, which catalyzes ubiquitination of target proteins together with ubiquitin-conjugating enzyme E2 UBE2L3 (By similarity). Acts as an atypical E3 ubiquitin-protein ligase by working together with cullin-5-RING ubiquitin ligase complex (ECS complex, also named CRL5 complex) and initiating ubiquitination of ECS substrates: associates with ECS complex and specifically mediates addition of the first ubiquitin on ECS targets (By similarity). The initial ubiquitin is then elongated (By similarity). E3 ubiquitin-protein ligase activity is activated upon binding to neddylated form of the ECS complex. Mediates 'Lys-6', 'Lys-48'- and 'Lys-63'-linked polyubiquitination. May play a role in myelopoiesis (By similarity).</text>
</comment>
<comment type="catalytic activity">
    <reaction evidence="1">
        <text>[E2 ubiquitin-conjugating enzyme]-S-ubiquitinyl-L-cysteine + [acceptor protein]-L-lysine = [E2 ubiquitin-conjugating enzyme]-L-cysteine + [acceptor protein]-N(6)-ubiquitinyl-L-lysine.</text>
        <dbReference type="EC" id="2.3.2.31"/>
    </reaction>
</comment>
<comment type="activity regulation">
    <text evidence="1 2">Autoinhibited by the ariadne domain, which masks the second RING-type zinc finger that contains the active site and inhibits the E3 activity (By similarity). Inhibition is relieved upon binding to neddylated cullin-RING ubiquitin ligase complexes, which activate the E3 ligase activity of ARIH1 (By similarity).</text>
</comment>
<comment type="pathway">
    <text>Protein modification; protein ubiquitination.</text>
</comment>
<comment type="subunit">
    <text evidence="1">Interacts (via RING-type zinc finger 1) with UBE2L3. Interacts (via RING-type zinc finger 2) with UBE2N. Interacts with neddylated CUL5. Interacts (via RING-type 2) with GFI1B. Interacts with GFI1; prevents its ubiquitination and proteasomal degradation. Interacts with DCUN1D1 (via UBA-like domain); promotes DCUN1D1 ubiquitination (By similarity).</text>
</comment>
<comment type="interaction">
    <interactant intactId="EBI-6861719">
        <id>Q9Z1K6</id>
    </interactant>
    <interactant intactId="EBI-644469">
        <id>Q60778</id>
        <label>Nfkbib</label>
    </interactant>
    <organismsDiffer>false</organismsDiffer>
    <experiments>2</experiments>
</comment>
<comment type="subcellular location">
    <subcellularLocation>
        <location evidence="1">Nucleus</location>
    </subcellularLocation>
    <subcellularLocation>
        <location evidence="1">Cytoplasm</location>
    </subcellularLocation>
</comment>
<comment type="domain">
    <text evidence="2">Members of the RBR family are atypical E3 ligases. They interact with the E2 conjugating enzyme UBE2L3 and function like HECT-type E3 enzymes: they bind E2s via the first RING-type zinc finger, but require an obligate trans-thiolation step during the ubiquitin transfer, requiring a conserved active site Cys residue in the second RING-type zinc finger. The active site probably forms a thioester intermediate with ubiquitin taken from the active-site cysteine of the E2 before ultimately transferring it to a Lys residue on the substrate.</text>
</comment>
<comment type="domain">
    <text evidence="2">The Ariadne domain inhibits activity by masking the second RING-type zinc finger that contains the active site.</text>
</comment>
<comment type="PTM">
    <text evidence="1">Ubiquitinated. Ubiquitination promotes proteasomal degradation.</text>
</comment>
<comment type="similarity">
    <text evidence="5">Belongs to the RBR family. Ariadne subfamily.</text>
</comment>
<organism>
    <name type="scientific">Mus musculus</name>
    <name type="common">Mouse</name>
    <dbReference type="NCBI Taxonomy" id="10090"/>
    <lineage>
        <taxon>Eukaryota</taxon>
        <taxon>Metazoa</taxon>
        <taxon>Chordata</taxon>
        <taxon>Craniata</taxon>
        <taxon>Vertebrata</taxon>
        <taxon>Euteleostomi</taxon>
        <taxon>Mammalia</taxon>
        <taxon>Eutheria</taxon>
        <taxon>Euarchontoglires</taxon>
        <taxon>Glires</taxon>
        <taxon>Rodentia</taxon>
        <taxon>Myomorpha</taxon>
        <taxon>Muroidea</taxon>
        <taxon>Muridae</taxon>
        <taxon>Murinae</taxon>
        <taxon>Mus</taxon>
        <taxon>Mus</taxon>
    </lineage>
</organism>
<reference key="1">
    <citation type="journal article" date="1999" name="FEBS Lett.">
        <title>A family of structurally related RING finger proteins interacts specifically with the ubiquitin-conjugating enzyme UbcM4.</title>
        <authorList>
            <person name="Martinez-Noel G."/>
            <person name="Niedenthal R."/>
            <person name="Tamura T."/>
            <person name="Harbers K."/>
        </authorList>
    </citation>
    <scope>NUCLEOTIDE SEQUENCE [MRNA]</scope>
    <source>
        <strain>BALB/cJ</strain>
        <tissue>Liver</tissue>
    </source>
</reference>
<reference key="2">
    <citation type="journal article" date="2000" name="Genetics">
        <title>Ariadne-1: a vital Drosophila gene is required in development and defines a new conserved family of ring-finger proteins.</title>
        <authorList>
            <person name="Aguilera M."/>
            <person name="Oliveros M."/>
            <person name="Martinez-Padron M."/>
            <person name="Barbas J.A."/>
            <person name="Ferrus A."/>
        </authorList>
    </citation>
    <scope>NUCLEOTIDE SEQUENCE [MRNA]</scope>
    <source>
        <tissue>Brain</tissue>
        <tissue>Embryo</tissue>
    </source>
</reference>
<reference key="3">
    <citation type="journal article" date="2004" name="Genome Res.">
        <title>The status, quality, and expansion of the NIH full-length cDNA project: the Mammalian Gene Collection (MGC).</title>
        <authorList>
            <consortium name="The MGC Project Team"/>
        </authorList>
    </citation>
    <scope>NUCLEOTIDE SEQUENCE [LARGE SCALE MRNA]</scope>
    <source>
        <strain>C57BL/6J</strain>
        <tissue>Brain</tissue>
    </source>
</reference>
<reference key="4">
    <citation type="journal article" date="2010" name="Cell">
        <title>A tissue-specific atlas of mouse protein phosphorylation and expression.</title>
        <authorList>
            <person name="Huttlin E.L."/>
            <person name="Jedrychowski M.P."/>
            <person name="Elias J.E."/>
            <person name="Goswami T."/>
            <person name="Rad R."/>
            <person name="Beausoleil S.A."/>
            <person name="Villen J."/>
            <person name="Haas W."/>
            <person name="Sowa M.E."/>
            <person name="Gygi S.P."/>
        </authorList>
    </citation>
    <scope>PHOSPHORYLATION [LARGE SCALE ANALYSIS] AT SER-352</scope>
    <scope>IDENTIFICATION BY MASS SPECTROMETRY [LARGE SCALE ANALYSIS]</scope>
    <source>
        <tissue>Brain</tissue>
        <tissue>Kidney</tissue>
        <tissue>Liver</tissue>
        <tissue>Lung</tissue>
        <tissue>Spleen</tissue>
        <tissue>Testis</tissue>
    </source>
</reference>
<protein>
    <recommendedName>
        <fullName>E3 ubiquitin-protein ligase ARIH2</fullName>
        <shortName>ARI-2</shortName>
        <shortName>Protein ariadne-2 homolog</shortName>
        <ecNumber evidence="1">2.3.2.31</ecNumber>
    </recommendedName>
    <alternativeName>
        <fullName>Triad1 protein</fullName>
    </alternativeName>
    <alternativeName>
        <fullName>UbcM4-interacting protein 48</fullName>
    </alternativeName>
</protein>
<feature type="chain" id="PRO_0000055756" description="E3 ubiquitin-protein ligase ARIH2">
    <location>
        <begin position="1"/>
        <end position="492"/>
    </location>
</feature>
<feature type="zinc finger region" description="RING-type 1" evidence="3">
    <location>
        <begin position="138"/>
        <end position="187"/>
    </location>
</feature>
<feature type="zinc finger region" description="IBR-type" evidence="3">
    <location>
        <begin position="207"/>
        <end position="269"/>
    </location>
</feature>
<feature type="zinc finger region" description="RING-type 2; atypical" evidence="3">
    <location>
        <begin position="296"/>
        <end position="325"/>
    </location>
</feature>
<feature type="region of interest" description="Disordered" evidence="4">
    <location>
        <begin position="1"/>
        <end position="37"/>
    </location>
</feature>
<feature type="region of interest" description="UBA-like" evidence="2">
    <location>
        <begin position="64"/>
        <end position="111"/>
    </location>
</feature>
<feature type="region of interest" description="TRIAD supradomain" evidence="3">
    <location>
        <begin position="134"/>
        <end position="343"/>
    </location>
</feature>
<feature type="region of interest" description="Ariadne domain" evidence="2">
    <location>
        <begin position="358"/>
        <end position="492"/>
    </location>
</feature>
<feature type="compositionally biased region" description="Polar residues" evidence="4">
    <location>
        <begin position="1"/>
        <end position="11"/>
    </location>
</feature>
<feature type="compositionally biased region" description="Acidic residues" evidence="4">
    <location>
        <begin position="12"/>
        <end position="36"/>
    </location>
</feature>
<feature type="active site" evidence="3">
    <location>
        <position position="309"/>
    </location>
</feature>
<feature type="binding site" evidence="3">
    <location>
        <position position="138"/>
    </location>
    <ligand>
        <name>Zn(2+)</name>
        <dbReference type="ChEBI" id="CHEBI:29105"/>
        <label>1</label>
    </ligand>
</feature>
<feature type="binding site" evidence="3">
    <location>
        <position position="141"/>
    </location>
    <ligand>
        <name>Zn(2+)</name>
        <dbReference type="ChEBI" id="CHEBI:29105"/>
        <label>1</label>
    </ligand>
</feature>
<feature type="binding site" evidence="3">
    <location>
        <position position="155"/>
    </location>
    <ligand>
        <name>Zn(2+)</name>
        <dbReference type="ChEBI" id="CHEBI:29105"/>
        <label>2</label>
    </ligand>
</feature>
<feature type="binding site" evidence="3">
    <location>
        <position position="157"/>
    </location>
    <ligand>
        <name>Zn(2+)</name>
        <dbReference type="ChEBI" id="CHEBI:29105"/>
        <label>2</label>
    </ligand>
</feature>
<feature type="binding site" evidence="3">
    <location>
        <position position="160"/>
    </location>
    <ligand>
        <name>Zn(2+)</name>
        <dbReference type="ChEBI" id="CHEBI:29105"/>
        <label>1</label>
    </ligand>
</feature>
<feature type="binding site" evidence="3">
    <location>
        <position position="163"/>
    </location>
    <ligand>
        <name>Zn(2+)</name>
        <dbReference type="ChEBI" id="CHEBI:29105"/>
        <label>1</label>
    </ligand>
</feature>
<feature type="binding site" evidence="3">
    <location>
        <position position="182"/>
    </location>
    <ligand>
        <name>Zn(2+)</name>
        <dbReference type="ChEBI" id="CHEBI:29105"/>
        <label>2</label>
    </ligand>
</feature>
<feature type="binding site" evidence="3">
    <location>
        <position position="187"/>
    </location>
    <ligand>
        <name>Zn(2+)</name>
        <dbReference type="ChEBI" id="CHEBI:29105"/>
        <label>2</label>
    </ligand>
</feature>
<feature type="binding site" evidence="3">
    <location>
        <position position="227"/>
    </location>
    <ligand>
        <name>Zn(2+)</name>
        <dbReference type="ChEBI" id="CHEBI:29105"/>
        <label>3</label>
    </ligand>
</feature>
<feature type="binding site" evidence="3">
    <location>
        <position position="232"/>
    </location>
    <ligand>
        <name>Zn(2+)</name>
        <dbReference type="ChEBI" id="CHEBI:29105"/>
        <label>3</label>
    </ligand>
</feature>
<feature type="binding site" evidence="3">
    <location>
        <position position="248"/>
    </location>
    <ligand>
        <name>Zn(2+)</name>
        <dbReference type="ChEBI" id="CHEBI:29105"/>
        <label>3</label>
    </ligand>
</feature>
<feature type="binding site" evidence="3">
    <location>
        <position position="251"/>
    </location>
    <ligand>
        <name>Zn(2+)</name>
        <dbReference type="ChEBI" id="CHEBI:29105"/>
        <label>3</label>
    </ligand>
</feature>
<feature type="binding site" evidence="3">
    <location>
        <position position="256"/>
    </location>
    <ligand>
        <name>Zn(2+)</name>
        <dbReference type="ChEBI" id="CHEBI:29105"/>
        <label>4</label>
    </ligand>
</feature>
<feature type="binding site" evidence="3">
    <location>
        <position position="259"/>
    </location>
    <ligand>
        <name>Zn(2+)</name>
        <dbReference type="ChEBI" id="CHEBI:29105"/>
        <label>4</label>
    </ligand>
</feature>
<feature type="binding site" evidence="3">
    <location>
        <position position="264"/>
    </location>
    <ligand>
        <name>Zn(2+)</name>
        <dbReference type="ChEBI" id="CHEBI:29105"/>
        <label>4</label>
    </ligand>
</feature>
<feature type="binding site" evidence="3">
    <location>
        <position position="269"/>
    </location>
    <ligand>
        <name>Zn(2+)</name>
        <dbReference type="ChEBI" id="CHEBI:29105"/>
        <label>4</label>
    </ligand>
</feature>
<feature type="binding site" evidence="3">
    <location>
        <position position="296"/>
    </location>
    <ligand>
        <name>Zn(2+)</name>
        <dbReference type="ChEBI" id="CHEBI:29105"/>
        <label>5</label>
    </ligand>
</feature>
<feature type="binding site" evidence="3">
    <location>
        <position position="299"/>
    </location>
    <ligand>
        <name>Zn(2+)</name>
        <dbReference type="ChEBI" id="CHEBI:29105"/>
        <label>5</label>
    </ligand>
</feature>
<feature type="binding site" evidence="3">
    <location>
        <position position="314"/>
    </location>
    <ligand>
        <name>Zn(2+)</name>
        <dbReference type="ChEBI" id="CHEBI:29105"/>
        <label>5</label>
    </ligand>
</feature>
<feature type="binding site" evidence="3">
    <location>
        <position position="317"/>
    </location>
    <ligand>
        <name>Zn(2+)</name>
        <dbReference type="ChEBI" id="CHEBI:29105"/>
        <label>5</label>
    </ligand>
</feature>
<feature type="binding site" evidence="3">
    <location>
        <position position="322"/>
    </location>
    <ligand>
        <name>Zn(2+)</name>
        <dbReference type="ChEBI" id="CHEBI:29105"/>
        <label>6</label>
    </ligand>
</feature>
<feature type="binding site" evidence="3">
    <location>
        <position position="325"/>
    </location>
    <ligand>
        <name>Zn(2+)</name>
        <dbReference type="ChEBI" id="CHEBI:29105"/>
        <label>6</label>
    </ligand>
</feature>
<feature type="binding site" evidence="3">
    <location>
        <position position="332"/>
    </location>
    <ligand>
        <name>Zn(2+)</name>
        <dbReference type="ChEBI" id="CHEBI:29105"/>
        <label>6</label>
    </ligand>
</feature>
<feature type="binding site" evidence="3">
    <location>
        <position position="339"/>
    </location>
    <ligand>
        <name>Zn(2+)</name>
        <dbReference type="ChEBI" id="CHEBI:29105"/>
        <label>6</label>
    </ligand>
</feature>
<feature type="modified residue" description="Phosphoserine" evidence="6">
    <location>
        <position position="352"/>
    </location>
</feature>
<proteinExistence type="evidence at protein level"/>
<accession>Q9Z1K6</accession>
<sequence>MSVDMNSQGSDSNEEDYDPNCEEEEEEEEDPGDIEDYYVGVASDVEQQGADAFDPEEYQFTCLTYKESEGALHEHMTSLASVLKVSHSVAKLILVNFHWQVSEILDRYRSNSAQLLVEARVQPNPSKHVPTAHPPHHCAVCMQFVRKENLLSLACQHQFCRSCWEQHCSVLVKDGVGVGISCMAQDCPLRTPEDFVFPLLPNEELRDKYRRYLFRDYVESHFQLQLCPGADCPMVIRVQEPRARRVQCNRCSEVFCFKCRQMYHAPTDCATIRKWLTKCADDSETANYISAHTKDCPKCNICIEKNGGCNHMQCSKCKHDFCWMCLGDWKTHGSEYYECSRYKENPDIVNQSQQAQAREALKKYLFYFERWENHNKSLQLEAQTYERIHEKIQERVMNNLGTWIDWQYLQNAAKLLAKCRYTLQYTYPYAYYMESGPRKKLFEYQQAQLEAEIENLSWKVERADSYDRGDLENQMHIAEQRRRTLLKDFHDT</sequence>
<gene>
    <name type="primary">Arih2</name>
    <name type="synonym">Ari2</name>
    <name type="synonym">Triad1</name>
    <name type="synonym">Uip48</name>
</gene>
<name>ARI2_MOUSE</name>